<evidence type="ECO:0000255" key="1">
    <source>
        <dbReference type="HAMAP-Rule" id="MF_00268"/>
    </source>
</evidence>
<evidence type="ECO:0000256" key="2">
    <source>
        <dbReference type="SAM" id="MobiDB-lite"/>
    </source>
</evidence>
<protein>
    <recommendedName>
        <fullName evidence="1">Protein RecA</fullName>
    </recommendedName>
    <alternativeName>
        <fullName evidence="1">Recombinase A</fullName>
    </alternativeName>
</protein>
<sequence length="353" mass="37973">MAIDENKQKALAAALGQIEKQFGKGSIMRLGEDRSMDVETISTGSLSLDIALGAGGLPMGRIVEIYGPESSGKTTLTLQVIAAAQREGKTCAFIDAEHALDPIYARKLGVDIDNLLCSQPDTGEQALEICDALARSGAVDVIVVDSVAALTPKAEIEGEIGDSHMGLAARMMSQAMRKLAGNLKQSNTLLIFINQIRMKIGVMFGNPETTTGGNALKFYASVRLDIRRIGAVKEGENVVGSETRVKVVKNKIAAPFKQAEFQILYGEGINFYGELVDLGVKEKLIEKAGAWYSYKGEKIGQGKANATAWLKDNPETAKEIEKKVRELLLSNPNSTPDFSVDDSEGVAETNEDF</sequence>
<organism>
    <name type="scientific">Shigella boydii serotype 18 (strain CDC 3083-94 / BS512)</name>
    <dbReference type="NCBI Taxonomy" id="344609"/>
    <lineage>
        <taxon>Bacteria</taxon>
        <taxon>Pseudomonadati</taxon>
        <taxon>Pseudomonadota</taxon>
        <taxon>Gammaproteobacteria</taxon>
        <taxon>Enterobacterales</taxon>
        <taxon>Enterobacteriaceae</taxon>
        <taxon>Shigella</taxon>
    </lineage>
</organism>
<dbReference type="EMBL" id="CP001063">
    <property type="protein sequence ID" value="ACD07238.1"/>
    <property type="molecule type" value="Genomic_DNA"/>
</dbReference>
<dbReference type="RefSeq" id="WP_000963143.1">
    <property type="nucleotide sequence ID" value="NC_010658.1"/>
</dbReference>
<dbReference type="SMR" id="B2U047"/>
<dbReference type="STRING" id="344609.SbBS512_E3178"/>
<dbReference type="GeneID" id="93779312"/>
<dbReference type="KEGG" id="sbc:SbBS512_E3178"/>
<dbReference type="HOGENOM" id="CLU_040469_3_2_6"/>
<dbReference type="Proteomes" id="UP000001030">
    <property type="component" value="Chromosome"/>
</dbReference>
<dbReference type="GO" id="GO:0005829">
    <property type="term" value="C:cytosol"/>
    <property type="evidence" value="ECO:0007669"/>
    <property type="project" value="TreeGrafter"/>
</dbReference>
<dbReference type="GO" id="GO:0005524">
    <property type="term" value="F:ATP binding"/>
    <property type="evidence" value="ECO:0007669"/>
    <property type="project" value="UniProtKB-UniRule"/>
</dbReference>
<dbReference type="GO" id="GO:0016887">
    <property type="term" value="F:ATP hydrolysis activity"/>
    <property type="evidence" value="ECO:0007669"/>
    <property type="project" value="InterPro"/>
</dbReference>
<dbReference type="GO" id="GO:0140664">
    <property type="term" value="F:ATP-dependent DNA damage sensor activity"/>
    <property type="evidence" value="ECO:0007669"/>
    <property type="project" value="InterPro"/>
</dbReference>
<dbReference type="GO" id="GO:0003684">
    <property type="term" value="F:damaged DNA binding"/>
    <property type="evidence" value="ECO:0007669"/>
    <property type="project" value="UniProtKB-UniRule"/>
</dbReference>
<dbReference type="GO" id="GO:0003697">
    <property type="term" value="F:single-stranded DNA binding"/>
    <property type="evidence" value="ECO:0007669"/>
    <property type="project" value="UniProtKB-UniRule"/>
</dbReference>
<dbReference type="GO" id="GO:0006310">
    <property type="term" value="P:DNA recombination"/>
    <property type="evidence" value="ECO:0007669"/>
    <property type="project" value="UniProtKB-UniRule"/>
</dbReference>
<dbReference type="GO" id="GO:0006281">
    <property type="term" value="P:DNA repair"/>
    <property type="evidence" value="ECO:0007669"/>
    <property type="project" value="UniProtKB-UniRule"/>
</dbReference>
<dbReference type="GO" id="GO:0009432">
    <property type="term" value="P:SOS response"/>
    <property type="evidence" value="ECO:0007669"/>
    <property type="project" value="UniProtKB-UniRule"/>
</dbReference>
<dbReference type="CDD" id="cd00983">
    <property type="entry name" value="RecA"/>
    <property type="match status" value="1"/>
</dbReference>
<dbReference type="FunFam" id="3.40.50.300:FF:000087">
    <property type="entry name" value="Recombinase RecA"/>
    <property type="match status" value="1"/>
</dbReference>
<dbReference type="Gene3D" id="3.40.50.300">
    <property type="entry name" value="P-loop containing nucleotide triphosphate hydrolases"/>
    <property type="match status" value="1"/>
</dbReference>
<dbReference type="HAMAP" id="MF_00268">
    <property type="entry name" value="RecA"/>
    <property type="match status" value="1"/>
</dbReference>
<dbReference type="InterPro" id="IPR003593">
    <property type="entry name" value="AAA+_ATPase"/>
</dbReference>
<dbReference type="InterPro" id="IPR013765">
    <property type="entry name" value="DNA_recomb/repair_RecA"/>
</dbReference>
<dbReference type="InterPro" id="IPR020584">
    <property type="entry name" value="DNA_recomb/repair_RecA_CS"/>
</dbReference>
<dbReference type="InterPro" id="IPR027417">
    <property type="entry name" value="P-loop_NTPase"/>
</dbReference>
<dbReference type="InterPro" id="IPR049261">
    <property type="entry name" value="RecA-like_C"/>
</dbReference>
<dbReference type="InterPro" id="IPR049428">
    <property type="entry name" value="RecA-like_N"/>
</dbReference>
<dbReference type="InterPro" id="IPR020588">
    <property type="entry name" value="RecA_ATP-bd"/>
</dbReference>
<dbReference type="InterPro" id="IPR023400">
    <property type="entry name" value="RecA_C_sf"/>
</dbReference>
<dbReference type="InterPro" id="IPR020587">
    <property type="entry name" value="RecA_monomer-monomer_interface"/>
</dbReference>
<dbReference type="NCBIfam" id="TIGR02012">
    <property type="entry name" value="tigrfam_recA"/>
    <property type="match status" value="1"/>
</dbReference>
<dbReference type="PANTHER" id="PTHR45900:SF1">
    <property type="entry name" value="MITOCHONDRIAL DNA REPAIR PROTEIN RECA HOMOLOG-RELATED"/>
    <property type="match status" value="1"/>
</dbReference>
<dbReference type="PANTHER" id="PTHR45900">
    <property type="entry name" value="RECA"/>
    <property type="match status" value="1"/>
</dbReference>
<dbReference type="Pfam" id="PF00154">
    <property type="entry name" value="RecA"/>
    <property type="match status" value="1"/>
</dbReference>
<dbReference type="Pfam" id="PF21096">
    <property type="entry name" value="RecA_C"/>
    <property type="match status" value="1"/>
</dbReference>
<dbReference type="PRINTS" id="PR00142">
    <property type="entry name" value="RECA"/>
</dbReference>
<dbReference type="SMART" id="SM00382">
    <property type="entry name" value="AAA"/>
    <property type="match status" value="1"/>
</dbReference>
<dbReference type="SUPFAM" id="SSF52540">
    <property type="entry name" value="P-loop containing nucleoside triphosphate hydrolases"/>
    <property type="match status" value="1"/>
</dbReference>
<dbReference type="SUPFAM" id="SSF54752">
    <property type="entry name" value="RecA protein, C-terminal domain"/>
    <property type="match status" value="1"/>
</dbReference>
<dbReference type="PROSITE" id="PS00321">
    <property type="entry name" value="RECA_1"/>
    <property type="match status" value="1"/>
</dbReference>
<dbReference type="PROSITE" id="PS50162">
    <property type="entry name" value="RECA_2"/>
    <property type="match status" value="1"/>
</dbReference>
<dbReference type="PROSITE" id="PS50163">
    <property type="entry name" value="RECA_3"/>
    <property type="match status" value="1"/>
</dbReference>
<reference key="1">
    <citation type="submission" date="2008-05" db="EMBL/GenBank/DDBJ databases">
        <title>Complete sequence of Shigella boydii serotype 18 strain BS512.</title>
        <authorList>
            <person name="Rasko D.A."/>
            <person name="Rosovitz M."/>
            <person name="Maurelli A.T."/>
            <person name="Myers G."/>
            <person name="Seshadri R."/>
            <person name="Cer R."/>
            <person name="Jiang L."/>
            <person name="Ravel J."/>
            <person name="Sebastian Y."/>
        </authorList>
    </citation>
    <scope>NUCLEOTIDE SEQUENCE [LARGE SCALE GENOMIC DNA]</scope>
    <source>
        <strain>CDC 3083-94 / BS512</strain>
    </source>
</reference>
<gene>
    <name evidence="1" type="primary">recA</name>
    <name type="ordered locus">SbBS512_E3178</name>
</gene>
<accession>B2U047</accession>
<name>RECA_SHIB3</name>
<proteinExistence type="inferred from homology"/>
<comment type="function">
    <text evidence="1">Can catalyze the hydrolysis of ATP in the presence of single-stranded DNA, the ATP-dependent uptake of single-stranded DNA by duplex DNA, and the ATP-dependent hybridization of homologous single-stranded DNAs. It interacts with LexA causing its activation and leading to its autocatalytic cleavage.</text>
</comment>
<comment type="subcellular location">
    <subcellularLocation>
        <location evidence="1">Cytoplasm</location>
    </subcellularLocation>
</comment>
<comment type="similarity">
    <text evidence="1">Belongs to the RecA family.</text>
</comment>
<feature type="chain" id="PRO_1000114369" description="Protein RecA">
    <location>
        <begin position="1"/>
        <end position="353"/>
    </location>
</feature>
<feature type="region of interest" description="Disordered" evidence="2">
    <location>
        <begin position="330"/>
        <end position="353"/>
    </location>
</feature>
<feature type="compositionally biased region" description="Acidic residues" evidence="2">
    <location>
        <begin position="339"/>
        <end position="353"/>
    </location>
</feature>
<feature type="binding site" evidence="1">
    <location>
        <begin position="67"/>
        <end position="74"/>
    </location>
    <ligand>
        <name>ATP</name>
        <dbReference type="ChEBI" id="CHEBI:30616"/>
    </ligand>
</feature>
<keyword id="KW-0067">ATP-binding</keyword>
<keyword id="KW-0963">Cytoplasm</keyword>
<keyword id="KW-0227">DNA damage</keyword>
<keyword id="KW-0233">DNA recombination</keyword>
<keyword id="KW-0234">DNA repair</keyword>
<keyword id="KW-0238">DNA-binding</keyword>
<keyword id="KW-0547">Nucleotide-binding</keyword>
<keyword id="KW-1185">Reference proteome</keyword>
<keyword id="KW-0742">SOS response</keyword>